<sequence>MSNRKYFGTDGIRGRVGDAPITPDFVLKLGWAAGKVLARHGSRKIIIGKDTRISGYMLESALEAGLAAAGLSALFTGPMPTPAVAYLTRTFRAEAGIVISASHNPFYDNGIKFFSIDGTKLPDAVEEAIEAEMEKEISCVDSAELGKASRIVDAAGRYIEFCKATFPNELSLSELKIVVDCANGATYHIAPNVLRELGANVIAIGCEPNGVNINAEVGATDVRALQARVLAEKADLGIAFDGDGDRVIMVDHEGNKVDGDQIMYIIAREGLRQGQLRGGAVGTLMSNMGLELALKQLGIPFARAKVGDRYVLEKMQEKGWRIGAENSGHVILLDKTTTGDGIVAGLQVLAAMARNHMSLHDLCSGMKMFPQILVNVRYTAGSGDPLEHESVKAVTAEVEAALGNRGRVLLRKSGTEPLIRVMVEGEDEAQVTEFAHRIADAVKAV</sequence>
<dbReference type="EC" id="5.4.2.10" evidence="1"/>
<dbReference type="EMBL" id="CP000800">
    <property type="protein sequence ID" value="ABV17119.1"/>
    <property type="molecule type" value="Genomic_DNA"/>
</dbReference>
<dbReference type="RefSeq" id="WP_000071134.1">
    <property type="nucleotide sequence ID" value="NC_009801.1"/>
</dbReference>
<dbReference type="SMR" id="A7ZS72"/>
<dbReference type="GeneID" id="75206032"/>
<dbReference type="KEGG" id="ecw:EcE24377A_3661"/>
<dbReference type="HOGENOM" id="CLU_016950_7_0_6"/>
<dbReference type="Proteomes" id="UP000001122">
    <property type="component" value="Chromosome"/>
</dbReference>
<dbReference type="GO" id="GO:0005829">
    <property type="term" value="C:cytosol"/>
    <property type="evidence" value="ECO:0007669"/>
    <property type="project" value="TreeGrafter"/>
</dbReference>
<dbReference type="GO" id="GO:0000287">
    <property type="term" value="F:magnesium ion binding"/>
    <property type="evidence" value="ECO:0007669"/>
    <property type="project" value="UniProtKB-UniRule"/>
</dbReference>
<dbReference type="GO" id="GO:0008966">
    <property type="term" value="F:phosphoglucosamine mutase activity"/>
    <property type="evidence" value="ECO:0007669"/>
    <property type="project" value="UniProtKB-UniRule"/>
</dbReference>
<dbReference type="GO" id="GO:0004615">
    <property type="term" value="F:phosphomannomutase activity"/>
    <property type="evidence" value="ECO:0007669"/>
    <property type="project" value="TreeGrafter"/>
</dbReference>
<dbReference type="GO" id="GO:0005975">
    <property type="term" value="P:carbohydrate metabolic process"/>
    <property type="evidence" value="ECO:0007669"/>
    <property type="project" value="InterPro"/>
</dbReference>
<dbReference type="GO" id="GO:0009252">
    <property type="term" value="P:peptidoglycan biosynthetic process"/>
    <property type="evidence" value="ECO:0007669"/>
    <property type="project" value="TreeGrafter"/>
</dbReference>
<dbReference type="GO" id="GO:0006048">
    <property type="term" value="P:UDP-N-acetylglucosamine biosynthetic process"/>
    <property type="evidence" value="ECO:0007669"/>
    <property type="project" value="TreeGrafter"/>
</dbReference>
<dbReference type="CDD" id="cd05802">
    <property type="entry name" value="GlmM"/>
    <property type="match status" value="1"/>
</dbReference>
<dbReference type="FunFam" id="3.30.310.50:FF:000001">
    <property type="entry name" value="Phosphoglucosamine mutase"/>
    <property type="match status" value="1"/>
</dbReference>
<dbReference type="FunFam" id="3.40.120.10:FF:000001">
    <property type="entry name" value="Phosphoglucosamine mutase"/>
    <property type="match status" value="1"/>
</dbReference>
<dbReference type="FunFam" id="3.40.120.10:FF:000002">
    <property type="entry name" value="Phosphoglucosamine mutase"/>
    <property type="match status" value="1"/>
</dbReference>
<dbReference type="Gene3D" id="3.40.120.10">
    <property type="entry name" value="Alpha-D-Glucose-1,6-Bisphosphate, subunit A, domain 3"/>
    <property type="match status" value="3"/>
</dbReference>
<dbReference type="Gene3D" id="3.30.310.50">
    <property type="entry name" value="Alpha-D-phosphohexomutase, C-terminal domain"/>
    <property type="match status" value="1"/>
</dbReference>
<dbReference type="HAMAP" id="MF_01554_B">
    <property type="entry name" value="GlmM_B"/>
    <property type="match status" value="1"/>
</dbReference>
<dbReference type="InterPro" id="IPR005844">
    <property type="entry name" value="A-D-PHexomutase_a/b/a-I"/>
</dbReference>
<dbReference type="InterPro" id="IPR016055">
    <property type="entry name" value="A-D-PHexomutase_a/b/a-I/II/III"/>
</dbReference>
<dbReference type="InterPro" id="IPR005845">
    <property type="entry name" value="A-D-PHexomutase_a/b/a-II"/>
</dbReference>
<dbReference type="InterPro" id="IPR005846">
    <property type="entry name" value="A-D-PHexomutase_a/b/a-III"/>
</dbReference>
<dbReference type="InterPro" id="IPR005843">
    <property type="entry name" value="A-D-PHexomutase_C"/>
</dbReference>
<dbReference type="InterPro" id="IPR036900">
    <property type="entry name" value="A-D-PHexomutase_C_sf"/>
</dbReference>
<dbReference type="InterPro" id="IPR016066">
    <property type="entry name" value="A-D-PHexomutase_CS"/>
</dbReference>
<dbReference type="InterPro" id="IPR005841">
    <property type="entry name" value="Alpha-D-phosphohexomutase_SF"/>
</dbReference>
<dbReference type="InterPro" id="IPR006352">
    <property type="entry name" value="GlmM_bact"/>
</dbReference>
<dbReference type="InterPro" id="IPR050060">
    <property type="entry name" value="Phosphoglucosamine_mutase"/>
</dbReference>
<dbReference type="NCBIfam" id="TIGR01455">
    <property type="entry name" value="glmM"/>
    <property type="match status" value="1"/>
</dbReference>
<dbReference type="NCBIfam" id="NF008139">
    <property type="entry name" value="PRK10887.1"/>
    <property type="match status" value="1"/>
</dbReference>
<dbReference type="PANTHER" id="PTHR42946:SF1">
    <property type="entry name" value="PHOSPHOGLUCOMUTASE (ALPHA-D-GLUCOSE-1,6-BISPHOSPHATE-DEPENDENT)"/>
    <property type="match status" value="1"/>
</dbReference>
<dbReference type="PANTHER" id="PTHR42946">
    <property type="entry name" value="PHOSPHOHEXOSE MUTASE"/>
    <property type="match status" value="1"/>
</dbReference>
<dbReference type="Pfam" id="PF02878">
    <property type="entry name" value="PGM_PMM_I"/>
    <property type="match status" value="1"/>
</dbReference>
<dbReference type="Pfam" id="PF02879">
    <property type="entry name" value="PGM_PMM_II"/>
    <property type="match status" value="1"/>
</dbReference>
<dbReference type="Pfam" id="PF02880">
    <property type="entry name" value="PGM_PMM_III"/>
    <property type="match status" value="1"/>
</dbReference>
<dbReference type="Pfam" id="PF00408">
    <property type="entry name" value="PGM_PMM_IV"/>
    <property type="match status" value="1"/>
</dbReference>
<dbReference type="PRINTS" id="PR00509">
    <property type="entry name" value="PGMPMM"/>
</dbReference>
<dbReference type="SUPFAM" id="SSF55957">
    <property type="entry name" value="Phosphoglucomutase, C-terminal domain"/>
    <property type="match status" value="1"/>
</dbReference>
<dbReference type="SUPFAM" id="SSF53738">
    <property type="entry name" value="Phosphoglucomutase, first 3 domains"/>
    <property type="match status" value="3"/>
</dbReference>
<dbReference type="PROSITE" id="PS00710">
    <property type="entry name" value="PGM_PMM"/>
    <property type="match status" value="1"/>
</dbReference>
<keyword id="KW-0413">Isomerase</keyword>
<keyword id="KW-0460">Magnesium</keyword>
<keyword id="KW-0479">Metal-binding</keyword>
<keyword id="KW-0597">Phosphoprotein</keyword>
<keyword id="KW-1185">Reference proteome</keyword>
<feature type="chain" id="PRO_1000068903" description="Phosphoglucosamine mutase">
    <location>
        <begin position="1"/>
        <end position="445"/>
    </location>
</feature>
<feature type="active site" description="Phosphoserine intermediate" evidence="1">
    <location>
        <position position="102"/>
    </location>
</feature>
<feature type="binding site" description="via phosphate group" evidence="1">
    <location>
        <position position="102"/>
    </location>
    <ligand>
        <name>Mg(2+)</name>
        <dbReference type="ChEBI" id="CHEBI:18420"/>
    </ligand>
</feature>
<feature type="binding site" evidence="1">
    <location>
        <position position="241"/>
    </location>
    <ligand>
        <name>Mg(2+)</name>
        <dbReference type="ChEBI" id="CHEBI:18420"/>
    </ligand>
</feature>
<feature type="binding site" evidence="1">
    <location>
        <position position="243"/>
    </location>
    <ligand>
        <name>Mg(2+)</name>
        <dbReference type="ChEBI" id="CHEBI:18420"/>
    </ligand>
</feature>
<feature type="binding site" evidence="1">
    <location>
        <position position="245"/>
    </location>
    <ligand>
        <name>Mg(2+)</name>
        <dbReference type="ChEBI" id="CHEBI:18420"/>
    </ligand>
</feature>
<feature type="modified residue" description="Phosphoserine" evidence="1">
    <location>
        <position position="102"/>
    </location>
</feature>
<reference key="1">
    <citation type="journal article" date="2008" name="J. Bacteriol.">
        <title>The pangenome structure of Escherichia coli: comparative genomic analysis of E. coli commensal and pathogenic isolates.</title>
        <authorList>
            <person name="Rasko D.A."/>
            <person name="Rosovitz M.J."/>
            <person name="Myers G.S.A."/>
            <person name="Mongodin E.F."/>
            <person name="Fricke W.F."/>
            <person name="Gajer P."/>
            <person name="Crabtree J."/>
            <person name="Sebaihia M."/>
            <person name="Thomson N.R."/>
            <person name="Chaudhuri R."/>
            <person name="Henderson I.R."/>
            <person name="Sperandio V."/>
            <person name="Ravel J."/>
        </authorList>
    </citation>
    <scope>NUCLEOTIDE SEQUENCE [LARGE SCALE GENOMIC DNA]</scope>
    <source>
        <strain>E24377A / ETEC</strain>
    </source>
</reference>
<name>GLMM_ECO24</name>
<gene>
    <name evidence="1" type="primary">glmM</name>
    <name type="ordered locus">EcE24377A_3661</name>
</gene>
<comment type="function">
    <text evidence="1">Catalyzes the conversion of glucosamine-6-phosphate to glucosamine-1-phosphate.</text>
</comment>
<comment type="catalytic activity">
    <reaction evidence="1">
        <text>alpha-D-glucosamine 1-phosphate = D-glucosamine 6-phosphate</text>
        <dbReference type="Rhea" id="RHEA:23424"/>
        <dbReference type="ChEBI" id="CHEBI:58516"/>
        <dbReference type="ChEBI" id="CHEBI:58725"/>
        <dbReference type="EC" id="5.4.2.10"/>
    </reaction>
</comment>
<comment type="cofactor">
    <cofactor evidence="1">
        <name>Mg(2+)</name>
        <dbReference type="ChEBI" id="CHEBI:18420"/>
    </cofactor>
    <text evidence="1">Binds 1 Mg(2+) ion per subunit.</text>
</comment>
<comment type="PTM">
    <text evidence="1">Activated by phosphorylation.</text>
</comment>
<comment type="similarity">
    <text evidence="1">Belongs to the phosphohexose mutase family.</text>
</comment>
<accession>A7ZS72</accession>
<protein>
    <recommendedName>
        <fullName evidence="1">Phosphoglucosamine mutase</fullName>
        <ecNumber evidence="1">5.4.2.10</ecNumber>
    </recommendedName>
</protein>
<organism>
    <name type="scientific">Escherichia coli O139:H28 (strain E24377A / ETEC)</name>
    <dbReference type="NCBI Taxonomy" id="331111"/>
    <lineage>
        <taxon>Bacteria</taxon>
        <taxon>Pseudomonadati</taxon>
        <taxon>Pseudomonadota</taxon>
        <taxon>Gammaproteobacteria</taxon>
        <taxon>Enterobacterales</taxon>
        <taxon>Enterobacteriaceae</taxon>
        <taxon>Escherichia</taxon>
    </lineage>
</organism>
<proteinExistence type="inferred from homology"/>
<evidence type="ECO:0000255" key="1">
    <source>
        <dbReference type="HAMAP-Rule" id="MF_01554"/>
    </source>
</evidence>